<reference evidence="5" key="1">
    <citation type="journal article" date="2009" name="BMC Evol. Biol.">
        <title>A proteomic approach for studying insect phylogeny: CAPA peptides of ancient insect taxa (Dictyoptera, Blattoptera) as a test case.</title>
        <authorList>
            <person name="Roth S."/>
            <person name="Fromm B."/>
            <person name="Gaede G."/>
            <person name="Predel R."/>
        </authorList>
    </citation>
    <scope>PROTEIN SEQUENCE</scope>
    <scope>PYROGLUTAMATE FORMATION AT GLN-1</scope>
    <scope>AMIDATION AT GLY-9</scope>
    <source>
        <tissue evidence="3">Corpora cardiaca</tissue>
    </source>
</reference>
<comment type="function">
    <text evidence="5">Hypertrehalosaemic factors are neuropeptides that elevate the level of trehalose in the hemolymph (trehalose is the major carbohydrate in the hemolymph of insects).</text>
</comment>
<comment type="subcellular location">
    <subcellularLocation>
        <location evidence="5">Secreted</location>
    </subcellularLocation>
</comment>
<comment type="similarity">
    <text evidence="2">Belongs to the AKH/HRTH/RPCH family.</text>
</comment>
<organism>
    <name type="scientific">Perisphaeria ruficornis</name>
    <name type="common">Cockroach</name>
    <dbReference type="NCBI Taxonomy" id="521516"/>
    <lineage>
        <taxon>Eukaryota</taxon>
        <taxon>Metazoa</taxon>
        <taxon>Ecdysozoa</taxon>
        <taxon>Arthropoda</taxon>
        <taxon>Hexapoda</taxon>
        <taxon>Insecta</taxon>
        <taxon>Pterygota</taxon>
        <taxon>Neoptera</taxon>
        <taxon>Polyneoptera</taxon>
        <taxon>Dictyoptera</taxon>
        <taxon>Blattodea</taxon>
        <taxon>Blaberoidea</taxon>
        <taxon>Blaberidae</taxon>
        <taxon>Perisphaerinae</taxon>
        <taxon>Perisphaeria</taxon>
    </lineage>
</organism>
<protein>
    <recommendedName>
        <fullName evidence="1">Hypertrehalosaemic factor</fullName>
    </recommendedName>
    <alternativeName>
        <fullName evidence="4">Adipokinetic hormone 1</fullName>
        <shortName evidence="4">PerRu-AKH-1</shortName>
    </alternativeName>
    <alternativeName>
        <fullName evidence="1">Hypertrehalosaemic neuropeptide</fullName>
    </alternativeName>
</protein>
<name>HTF_PERRU</name>
<keyword id="KW-0027">Amidation</keyword>
<keyword id="KW-0903">Direct protein sequencing</keyword>
<keyword id="KW-0372">Hormone</keyword>
<keyword id="KW-0527">Neuropeptide</keyword>
<keyword id="KW-0873">Pyrrolidone carboxylic acid</keyword>
<keyword id="KW-0964">Secreted</keyword>
<evidence type="ECO:0000250" key="1">
    <source>
        <dbReference type="UniProtKB" id="P67790"/>
    </source>
</evidence>
<evidence type="ECO:0000255" key="2"/>
<evidence type="ECO:0000269" key="3">
    <source>
    </source>
</evidence>
<evidence type="ECO:0000303" key="4">
    <source>
    </source>
</evidence>
<evidence type="ECO:0000305" key="5"/>
<sequence>QVNFSPGWG</sequence>
<dbReference type="GO" id="GO:0005576">
    <property type="term" value="C:extracellular region"/>
    <property type="evidence" value="ECO:0007669"/>
    <property type="project" value="UniProtKB-SubCell"/>
</dbReference>
<dbReference type="GO" id="GO:0005179">
    <property type="term" value="F:hormone activity"/>
    <property type="evidence" value="ECO:0007669"/>
    <property type="project" value="UniProtKB-KW"/>
</dbReference>
<dbReference type="GO" id="GO:0007218">
    <property type="term" value="P:neuropeptide signaling pathway"/>
    <property type="evidence" value="ECO:0007669"/>
    <property type="project" value="UniProtKB-KW"/>
</dbReference>
<dbReference type="InterPro" id="IPR002047">
    <property type="entry name" value="Adipokinetic_hormone_CS"/>
</dbReference>
<dbReference type="PROSITE" id="PS00256">
    <property type="entry name" value="AKH"/>
    <property type="match status" value="1"/>
</dbReference>
<accession>P85721</accession>
<proteinExistence type="evidence at protein level"/>
<feature type="peptide" id="PRO_0000378665" description="Hypertrehalosaemic factor" evidence="3">
    <location>
        <begin position="1"/>
        <end position="9"/>
    </location>
</feature>
<feature type="modified residue" description="Pyrrolidone carboxylic acid" evidence="3">
    <location>
        <position position="1"/>
    </location>
</feature>
<feature type="modified residue" description="Glycine amide" evidence="3">
    <location>
        <position position="9"/>
    </location>
</feature>